<accession>Q6YR57</accession>
<proteinExistence type="inferred from homology"/>
<sequence>MKIMSVNSGSSSLKFQLLEMPQQEVIVSGLVERIGSNQAVFTMKTKDKKDKQVLEVLNHQTAVELLLDALIQKKVINTLEEIEGVGHRVVQGGEIFSDSAVLTEKTLAQIESLCDLAPLHNPANIISIKAFQKVLPQVFQVAVFDTTFHQSMPAVNFLYAAPYYWYQKYQIRKYGAHGTSYKYITEQMQQILGKKNAKIIICHAGNGVSLCAVDSGKSVDTSMGFTPLEGVPMGTRSGNIDPAVVKFIAEKENKTVACVIDDLNKKSGYLGVSGISNDTRDILANIKEGNQQAILSHDIQVKRIVDYIASYYVLLKGVDALVFTAGIGENSSFFRSEIIKRLSVLGIKLDEEKNKVQGKQELITTFDSAIKAFVVPTNEELAIAQDVLRLQQNQTNQDKDDQQECFCCCG</sequence>
<comment type="function">
    <text evidence="1">Catalyzes the formation of acetyl phosphate from acetate and ATP. Can also catalyze the reverse reaction.</text>
</comment>
<comment type="catalytic activity">
    <reaction evidence="1">
        <text>acetate + ATP = acetyl phosphate + ADP</text>
        <dbReference type="Rhea" id="RHEA:11352"/>
        <dbReference type="ChEBI" id="CHEBI:22191"/>
        <dbReference type="ChEBI" id="CHEBI:30089"/>
        <dbReference type="ChEBI" id="CHEBI:30616"/>
        <dbReference type="ChEBI" id="CHEBI:456216"/>
        <dbReference type="EC" id="2.7.2.1"/>
    </reaction>
</comment>
<comment type="cofactor">
    <cofactor evidence="1">
        <name>Mg(2+)</name>
        <dbReference type="ChEBI" id="CHEBI:18420"/>
    </cofactor>
    <cofactor evidence="1">
        <name>Mn(2+)</name>
        <dbReference type="ChEBI" id="CHEBI:29035"/>
    </cofactor>
    <text evidence="1">Mg(2+). Can also accept Mn(2+).</text>
</comment>
<comment type="pathway">
    <text evidence="1">Metabolic intermediate biosynthesis; acetyl-CoA biosynthesis; acetyl-CoA from acetate: step 1/2.</text>
</comment>
<comment type="subunit">
    <text evidence="1">Homodimer.</text>
</comment>
<comment type="subcellular location">
    <subcellularLocation>
        <location evidence="1">Cytoplasm</location>
    </subcellularLocation>
</comment>
<comment type="similarity">
    <text evidence="1">Belongs to the acetokinase family.</text>
</comment>
<organism>
    <name type="scientific">Onion yellows phytoplasma (strain OY-M)</name>
    <dbReference type="NCBI Taxonomy" id="262768"/>
    <lineage>
        <taxon>Bacteria</taxon>
        <taxon>Bacillati</taxon>
        <taxon>Mycoplasmatota</taxon>
        <taxon>Mollicutes</taxon>
        <taxon>Acholeplasmatales</taxon>
        <taxon>Acholeplasmataceae</taxon>
        <taxon>Candidatus Phytoplasma</taxon>
        <taxon>16SrI (Aster yellows group)</taxon>
    </lineage>
</organism>
<reference key="1">
    <citation type="journal article" date="2004" name="Nat. Genet.">
        <title>Reductive evolution suggested from the complete genome sequence of a plant-pathogenic phytoplasma.</title>
        <authorList>
            <person name="Oshima K."/>
            <person name="Kakizawa S."/>
            <person name="Nishigawa H."/>
            <person name="Jung H.-Y."/>
            <person name="Wei W."/>
            <person name="Suzuki S."/>
            <person name="Arashida R."/>
            <person name="Nakata D."/>
            <person name="Miyata S."/>
            <person name="Ugaki M."/>
            <person name="Namba S."/>
        </authorList>
    </citation>
    <scope>NUCLEOTIDE SEQUENCE [LARGE SCALE GENOMIC DNA]</scope>
    <source>
        <strain>OY-M</strain>
    </source>
</reference>
<protein>
    <recommendedName>
        <fullName evidence="1">Acetate kinase</fullName>
        <ecNumber evidence="1">2.7.2.1</ecNumber>
    </recommendedName>
    <alternativeName>
        <fullName evidence="1">Acetokinase</fullName>
    </alternativeName>
</protein>
<gene>
    <name evidence="1" type="primary">ackA</name>
    <name type="ordered locus">PAM_159</name>
</gene>
<feature type="chain" id="PRO_0000107596" description="Acetate kinase">
    <location>
        <begin position="1"/>
        <end position="410"/>
    </location>
</feature>
<feature type="active site" description="Proton donor/acceptor" evidence="1">
    <location>
        <position position="145"/>
    </location>
</feature>
<feature type="binding site" evidence="1">
    <location>
        <position position="7"/>
    </location>
    <ligand>
        <name>Mg(2+)</name>
        <dbReference type="ChEBI" id="CHEBI:18420"/>
    </ligand>
</feature>
<feature type="binding site" evidence="1">
    <location>
        <position position="14"/>
    </location>
    <ligand>
        <name>ATP</name>
        <dbReference type="ChEBI" id="CHEBI:30616"/>
    </ligand>
</feature>
<feature type="binding site" evidence="1">
    <location>
        <position position="88"/>
    </location>
    <ligand>
        <name>substrate</name>
    </ligand>
</feature>
<feature type="binding site" evidence="1">
    <location>
        <begin position="203"/>
        <end position="207"/>
    </location>
    <ligand>
        <name>ATP</name>
        <dbReference type="ChEBI" id="CHEBI:30616"/>
    </ligand>
</feature>
<feature type="binding site" evidence="1">
    <location>
        <begin position="278"/>
        <end position="280"/>
    </location>
    <ligand>
        <name>ATP</name>
        <dbReference type="ChEBI" id="CHEBI:30616"/>
    </ligand>
</feature>
<feature type="binding site" evidence="1">
    <location>
        <begin position="326"/>
        <end position="330"/>
    </location>
    <ligand>
        <name>ATP</name>
        <dbReference type="ChEBI" id="CHEBI:30616"/>
    </ligand>
</feature>
<feature type="binding site" evidence="1">
    <location>
        <position position="379"/>
    </location>
    <ligand>
        <name>Mg(2+)</name>
        <dbReference type="ChEBI" id="CHEBI:18420"/>
    </ligand>
</feature>
<feature type="site" description="Transition state stabilizer" evidence="1">
    <location>
        <position position="177"/>
    </location>
</feature>
<feature type="site" description="Transition state stabilizer" evidence="1">
    <location>
        <position position="236"/>
    </location>
</feature>
<dbReference type="EC" id="2.7.2.1" evidence="1"/>
<dbReference type="EMBL" id="AP006628">
    <property type="protein sequence ID" value="BAD04244.1"/>
    <property type="molecule type" value="Genomic_DNA"/>
</dbReference>
<dbReference type="SMR" id="Q6YR57"/>
<dbReference type="STRING" id="262768.PAM_159"/>
<dbReference type="KEGG" id="poy:PAM_159"/>
<dbReference type="eggNOG" id="COG0282">
    <property type="taxonomic scope" value="Bacteria"/>
</dbReference>
<dbReference type="HOGENOM" id="CLU_020352_0_1_14"/>
<dbReference type="BioCyc" id="OYEL262768:G1G26-193-MONOMER"/>
<dbReference type="UniPathway" id="UPA00340">
    <property type="reaction ID" value="UER00458"/>
</dbReference>
<dbReference type="Proteomes" id="UP000002523">
    <property type="component" value="Chromosome"/>
</dbReference>
<dbReference type="GO" id="GO:0005737">
    <property type="term" value="C:cytoplasm"/>
    <property type="evidence" value="ECO:0007669"/>
    <property type="project" value="UniProtKB-SubCell"/>
</dbReference>
<dbReference type="GO" id="GO:0008776">
    <property type="term" value="F:acetate kinase activity"/>
    <property type="evidence" value="ECO:0007669"/>
    <property type="project" value="UniProtKB-UniRule"/>
</dbReference>
<dbReference type="GO" id="GO:0005524">
    <property type="term" value="F:ATP binding"/>
    <property type="evidence" value="ECO:0007669"/>
    <property type="project" value="UniProtKB-KW"/>
</dbReference>
<dbReference type="GO" id="GO:0000287">
    <property type="term" value="F:magnesium ion binding"/>
    <property type="evidence" value="ECO:0007669"/>
    <property type="project" value="UniProtKB-UniRule"/>
</dbReference>
<dbReference type="GO" id="GO:0006083">
    <property type="term" value="P:acetate metabolic process"/>
    <property type="evidence" value="ECO:0007669"/>
    <property type="project" value="TreeGrafter"/>
</dbReference>
<dbReference type="GO" id="GO:0006085">
    <property type="term" value="P:acetyl-CoA biosynthetic process"/>
    <property type="evidence" value="ECO:0007669"/>
    <property type="project" value="UniProtKB-UniRule"/>
</dbReference>
<dbReference type="CDD" id="cd24010">
    <property type="entry name" value="ASKHA_NBD_AcK_PK"/>
    <property type="match status" value="1"/>
</dbReference>
<dbReference type="Gene3D" id="3.30.420.40">
    <property type="match status" value="2"/>
</dbReference>
<dbReference type="HAMAP" id="MF_00020">
    <property type="entry name" value="Acetate_kinase"/>
    <property type="match status" value="1"/>
</dbReference>
<dbReference type="InterPro" id="IPR004372">
    <property type="entry name" value="Ac/propionate_kinase"/>
</dbReference>
<dbReference type="InterPro" id="IPR000890">
    <property type="entry name" value="Aliphatic_acid_kin_short-chain"/>
</dbReference>
<dbReference type="InterPro" id="IPR023865">
    <property type="entry name" value="Aliphatic_acid_kinase_CS"/>
</dbReference>
<dbReference type="InterPro" id="IPR043129">
    <property type="entry name" value="ATPase_NBD"/>
</dbReference>
<dbReference type="NCBIfam" id="TIGR00016">
    <property type="entry name" value="ackA"/>
    <property type="match status" value="1"/>
</dbReference>
<dbReference type="PANTHER" id="PTHR21060">
    <property type="entry name" value="ACETATE KINASE"/>
    <property type="match status" value="1"/>
</dbReference>
<dbReference type="PANTHER" id="PTHR21060:SF15">
    <property type="entry name" value="ACETATE KINASE-RELATED"/>
    <property type="match status" value="1"/>
</dbReference>
<dbReference type="Pfam" id="PF00871">
    <property type="entry name" value="Acetate_kinase"/>
    <property type="match status" value="1"/>
</dbReference>
<dbReference type="PIRSF" id="PIRSF000722">
    <property type="entry name" value="Acetate_prop_kin"/>
    <property type="match status" value="1"/>
</dbReference>
<dbReference type="PRINTS" id="PR00471">
    <property type="entry name" value="ACETATEKNASE"/>
</dbReference>
<dbReference type="SUPFAM" id="SSF53067">
    <property type="entry name" value="Actin-like ATPase domain"/>
    <property type="match status" value="2"/>
</dbReference>
<dbReference type="PROSITE" id="PS01075">
    <property type="entry name" value="ACETATE_KINASE_1"/>
    <property type="match status" value="1"/>
</dbReference>
<dbReference type="PROSITE" id="PS01076">
    <property type="entry name" value="ACETATE_KINASE_2"/>
    <property type="match status" value="1"/>
</dbReference>
<evidence type="ECO:0000255" key="1">
    <source>
        <dbReference type="HAMAP-Rule" id="MF_00020"/>
    </source>
</evidence>
<name>ACKA_ONYPE</name>
<keyword id="KW-0067">ATP-binding</keyword>
<keyword id="KW-0963">Cytoplasm</keyword>
<keyword id="KW-0418">Kinase</keyword>
<keyword id="KW-0460">Magnesium</keyword>
<keyword id="KW-0479">Metal-binding</keyword>
<keyword id="KW-0547">Nucleotide-binding</keyword>
<keyword id="KW-0808">Transferase</keyword>